<keyword id="KW-0342">GTP-binding</keyword>
<keyword id="KW-0378">Hydrolase</keyword>
<keyword id="KW-0547">Nucleotide-binding</keyword>
<keyword id="KW-1185">Reference proteome</keyword>
<organism>
    <name type="scientific">Eremothecium gossypii (strain ATCC 10895 / CBS 109.51 / FGSC 9923 / NRRL Y-1056)</name>
    <name type="common">Yeast</name>
    <name type="synonym">Ashbya gossypii</name>
    <dbReference type="NCBI Taxonomy" id="284811"/>
    <lineage>
        <taxon>Eukaryota</taxon>
        <taxon>Fungi</taxon>
        <taxon>Dikarya</taxon>
        <taxon>Ascomycota</taxon>
        <taxon>Saccharomycotina</taxon>
        <taxon>Saccharomycetes</taxon>
        <taxon>Saccharomycetales</taxon>
        <taxon>Saccharomycetaceae</taxon>
        <taxon>Eremothecium</taxon>
    </lineage>
</organism>
<protein>
    <recommendedName>
        <fullName evidence="1">GPN-loop GTPase 3</fullName>
    </recommendedName>
</protein>
<accession>Q750Q9</accession>
<name>GPN3_EREGS</name>
<comment type="function">
    <text evidence="1">Small GTPase required for proper nuclear import of RNA polymerase II and III (RNAPII and RNAPIII). May act at an RNAP assembly step prior to nuclear import.</text>
</comment>
<comment type="subunit">
    <text evidence="1">Heterodimers with GPN1 or GPN2. Binds to RNA polymerase II (RNAPII).</text>
</comment>
<comment type="similarity">
    <text evidence="3">Belongs to the GPN-loop GTPase family.</text>
</comment>
<proteinExistence type="inferred from homology"/>
<dbReference type="EMBL" id="AE016820">
    <property type="protein sequence ID" value="AAS54374.1"/>
    <property type="molecule type" value="Genomic_DNA"/>
</dbReference>
<dbReference type="RefSeq" id="NP_986550.1">
    <property type="nucleotide sequence ID" value="NM_211612.1"/>
</dbReference>
<dbReference type="SMR" id="Q750Q9"/>
<dbReference type="FunCoup" id="Q750Q9">
    <property type="interactions" value="932"/>
</dbReference>
<dbReference type="STRING" id="284811.Q750Q9"/>
<dbReference type="EnsemblFungi" id="AAS54374">
    <property type="protein sequence ID" value="AAS54374"/>
    <property type="gene ID" value="AGOS_AGL117C"/>
</dbReference>
<dbReference type="GeneID" id="4622849"/>
<dbReference type="KEGG" id="ago:AGOS_AGL117C"/>
<dbReference type="eggNOG" id="KOG1534">
    <property type="taxonomic scope" value="Eukaryota"/>
</dbReference>
<dbReference type="HOGENOM" id="CLU_037460_0_0_1"/>
<dbReference type="InParanoid" id="Q750Q9"/>
<dbReference type="OMA" id="LYTHMTV"/>
<dbReference type="OrthoDB" id="5839at2759"/>
<dbReference type="Proteomes" id="UP000000591">
    <property type="component" value="Chromosome VII"/>
</dbReference>
<dbReference type="GO" id="GO:0005525">
    <property type="term" value="F:GTP binding"/>
    <property type="evidence" value="ECO:0007669"/>
    <property type="project" value="UniProtKB-KW"/>
</dbReference>
<dbReference type="GO" id="GO:0003924">
    <property type="term" value="F:GTPase activity"/>
    <property type="evidence" value="ECO:0000318"/>
    <property type="project" value="GO_Central"/>
</dbReference>
<dbReference type="GO" id="GO:0007064">
    <property type="term" value="P:mitotic sister chromatid cohesion"/>
    <property type="evidence" value="ECO:0007669"/>
    <property type="project" value="EnsemblFungi"/>
</dbReference>
<dbReference type="GO" id="GO:0006606">
    <property type="term" value="P:protein import into nucleus"/>
    <property type="evidence" value="ECO:0007669"/>
    <property type="project" value="EnsemblFungi"/>
</dbReference>
<dbReference type="CDD" id="cd17872">
    <property type="entry name" value="GPN3"/>
    <property type="match status" value="1"/>
</dbReference>
<dbReference type="FunFam" id="3.40.50.300:FF:000552">
    <property type="entry name" value="GPN-loop GTPase 3"/>
    <property type="match status" value="1"/>
</dbReference>
<dbReference type="Gene3D" id="3.40.50.300">
    <property type="entry name" value="P-loop containing nucleotide triphosphate hydrolases"/>
    <property type="match status" value="1"/>
</dbReference>
<dbReference type="InterPro" id="IPR004130">
    <property type="entry name" value="Gpn"/>
</dbReference>
<dbReference type="InterPro" id="IPR030228">
    <property type="entry name" value="Gpn3"/>
</dbReference>
<dbReference type="InterPro" id="IPR027417">
    <property type="entry name" value="P-loop_NTPase"/>
</dbReference>
<dbReference type="PANTHER" id="PTHR21231:SF7">
    <property type="entry name" value="GPN-LOOP GTPASE 3"/>
    <property type="match status" value="1"/>
</dbReference>
<dbReference type="PANTHER" id="PTHR21231">
    <property type="entry name" value="XPA-BINDING PROTEIN 1-RELATED"/>
    <property type="match status" value="1"/>
</dbReference>
<dbReference type="Pfam" id="PF03029">
    <property type="entry name" value="ATP_bind_1"/>
    <property type="match status" value="1"/>
</dbReference>
<dbReference type="SUPFAM" id="SSF52540">
    <property type="entry name" value="P-loop containing nucleoside triphosphate hydrolases"/>
    <property type="match status" value="1"/>
</dbReference>
<reference key="1">
    <citation type="journal article" date="2004" name="Science">
        <title>The Ashbya gossypii genome as a tool for mapping the ancient Saccharomyces cerevisiae genome.</title>
        <authorList>
            <person name="Dietrich F.S."/>
            <person name="Voegeli S."/>
            <person name="Brachat S."/>
            <person name="Lerch A."/>
            <person name="Gates K."/>
            <person name="Steiner S."/>
            <person name="Mohr C."/>
            <person name="Poehlmann R."/>
            <person name="Luedi P."/>
            <person name="Choi S."/>
            <person name="Wing R.A."/>
            <person name="Flavier A."/>
            <person name="Gaffney T.D."/>
            <person name="Philippsen P."/>
        </authorList>
    </citation>
    <scope>NUCLEOTIDE SEQUENCE [LARGE SCALE GENOMIC DNA]</scope>
    <source>
        <strain>ATCC 10895 / CBS 109.51 / FGSC 9923 / NRRL Y-1056</strain>
    </source>
</reference>
<reference key="2">
    <citation type="journal article" date="2013" name="G3 (Bethesda)">
        <title>Genomes of Ashbya fungi isolated from insects reveal four mating-type loci, numerous translocations, lack of transposons, and distinct gene duplications.</title>
        <authorList>
            <person name="Dietrich F.S."/>
            <person name="Voegeli S."/>
            <person name="Kuo S."/>
            <person name="Philippsen P."/>
        </authorList>
    </citation>
    <scope>GENOME REANNOTATION</scope>
    <source>
        <strain>ATCC 10895 / CBS 109.51 / FGSC 9923 / NRRL Y-1056</strain>
    </source>
</reference>
<evidence type="ECO:0000250" key="1">
    <source>
        <dbReference type="UniProtKB" id="Q06543"/>
    </source>
</evidence>
<evidence type="ECO:0000250" key="2">
    <source>
        <dbReference type="UniProtKB" id="Q9UYR9"/>
    </source>
</evidence>
<evidence type="ECO:0000305" key="3"/>
<gene>
    <name type="ordered locus">AGL117C</name>
</gene>
<sequence>MSRVGVLVLGPAGAGKSTFCNGIISYMQSVGRRAHIVNLDPAAEASEYEFTVDIRDLISLDDVMEELSLGPNGSLVYCFEYLLENLDWLDEEIGDYNDEYLIFDCPGQIELYTHIPVLPTIVRHLQNQLNFNLCASYLLEAPFVIDTSKFFSGALSAMSAMILLELPHINVLSKVDLIKDEYSKKRLKRFLNPDPMLLVDSANADTNSKFHQLNKAIANLVDDFGMVQFLPLEAKNPDSVSTILSYIDDITQWGEAQEPKEPNDALEIEDM</sequence>
<feature type="chain" id="PRO_0000255586" description="GPN-loop GTPase 3">
    <location>
        <begin position="1"/>
        <end position="271"/>
    </location>
</feature>
<feature type="short sequence motif" description="Gly-Pro-Asn (GPN)-loop; involved in dimer interface" evidence="2">
    <location>
        <begin position="70"/>
        <end position="72"/>
    </location>
</feature>
<feature type="binding site" evidence="2">
    <location>
        <begin position="13"/>
        <end position="18"/>
    </location>
    <ligand>
        <name>GTP</name>
        <dbReference type="ChEBI" id="CHEBI:37565"/>
    </ligand>
</feature>
<feature type="binding site" evidence="2">
    <location>
        <begin position="173"/>
        <end position="176"/>
    </location>
    <ligand>
        <name>GTP</name>
        <dbReference type="ChEBI" id="CHEBI:37565"/>
    </ligand>
</feature>
<feature type="site" description="Stabilizes the phosphate intermediate; shared with dimeric partner" evidence="2">
    <location>
        <position position="72"/>
    </location>
</feature>